<protein>
    <recommendedName>
        <fullName>Violacin-A</fullName>
    </recommendedName>
    <alternativeName>
        <fullName>Violacin-1</fullName>
    </alternativeName>
</protein>
<accession>Q2HY54</accession>
<sequence length="106" mass="11589">MDAQKMKMVIGLVLVATTAFALMIPAASAVDDFITRRAYDNLVKSGAIKDIPVMAKTIISNPVLEEGMLTYYTNKKLGDSAISCGETCFKFKCYTPRCSCSYPVCK</sequence>
<feature type="signal peptide" evidence="1">
    <location>
        <begin position="1"/>
        <end position="29"/>
    </location>
</feature>
<feature type="propeptide" id="PRO_0000294965" evidence="2 3">
    <location>
        <begin position="30"/>
        <end position="79"/>
    </location>
</feature>
<feature type="peptide" id="PRO_0000294966" description="Violacin-A" evidence="2">
    <location>
        <begin position="80"/>
        <end position="106"/>
    </location>
</feature>
<feature type="disulfide bond" evidence="2">
    <location>
        <begin position="84"/>
        <end position="98"/>
    </location>
</feature>
<feature type="disulfide bond" evidence="2">
    <location>
        <begin position="88"/>
        <end position="100"/>
    </location>
</feature>
<feature type="disulfide bond" evidence="2">
    <location>
        <begin position="93"/>
        <end position="105"/>
    </location>
</feature>
<dbReference type="EMBL" id="DQ365813">
    <property type="protein sequence ID" value="ABC94585.1"/>
    <property type="molecule type" value="mRNA"/>
</dbReference>
<dbReference type="PDB" id="2FQA">
    <property type="method" value="NMR"/>
    <property type="chains" value="A=80-106"/>
</dbReference>
<dbReference type="PDBsum" id="2FQA"/>
<dbReference type="SMR" id="Q2HY54"/>
<dbReference type="GO" id="GO:0006952">
    <property type="term" value="P:defense response"/>
    <property type="evidence" value="ECO:0007669"/>
    <property type="project" value="UniProtKB-KW"/>
</dbReference>
<dbReference type="GO" id="GO:0031640">
    <property type="term" value="P:killing of cells of another organism"/>
    <property type="evidence" value="ECO:0007669"/>
    <property type="project" value="UniProtKB-KW"/>
</dbReference>
<dbReference type="InterPro" id="IPR005535">
    <property type="entry name" value="Cyclotide"/>
</dbReference>
<dbReference type="InterPro" id="IPR036146">
    <property type="entry name" value="Cyclotide_sf"/>
</dbReference>
<dbReference type="Pfam" id="PF03784">
    <property type="entry name" value="Cyclotide"/>
    <property type="match status" value="1"/>
</dbReference>
<dbReference type="SUPFAM" id="SSF57038">
    <property type="entry name" value="Cyclotides"/>
    <property type="match status" value="1"/>
</dbReference>
<proteinExistence type="evidence at protein level"/>
<organism>
    <name type="scientific">Viola odorata</name>
    <name type="common">Sweet violet</name>
    <dbReference type="NCBI Taxonomy" id="97441"/>
    <lineage>
        <taxon>Eukaryota</taxon>
        <taxon>Viridiplantae</taxon>
        <taxon>Streptophyta</taxon>
        <taxon>Embryophyta</taxon>
        <taxon>Tracheophyta</taxon>
        <taxon>Spermatophyta</taxon>
        <taxon>Magnoliopsida</taxon>
        <taxon>eudicotyledons</taxon>
        <taxon>Gunneridae</taxon>
        <taxon>Pentapetalae</taxon>
        <taxon>rosids</taxon>
        <taxon>fabids</taxon>
        <taxon>Malpighiales</taxon>
        <taxon>Violaceae</taxon>
        <taxon>Viola</taxon>
        <taxon>Viola subgen. Viola</taxon>
        <taxon>Viola sect. Viola</taxon>
        <taxon>Viola subsect. Viola</taxon>
    </lineage>
</organism>
<name>VIOLA_VIOOD</name>
<comment type="function">
    <text evidence="2 4">Probably participates in a plant defense mechanism. Has low hemolytic activity.</text>
</comment>
<comment type="domain">
    <text evidence="2">The presence of a 'disulfide through disulfide knot' structurally defines this protein as a knottin.</text>
</comment>
<comment type="PTM">
    <text evidence="2 3">Violacin-A is not a cyclic peptide.</text>
</comment>
<comment type="mass spectrometry" mass="3004.9" method="MALDI" evidence="2"/>
<comment type="mass spectrometry" mass="3004.3" method="MALDI" evidence="3"/>
<comment type="miscellaneous">
    <text>The presence of a premature stop codon inhibits the translation of a key Asn residue that is thought to be required for cyclization.</text>
</comment>
<comment type="similarity">
    <text evidence="1">Belongs to the cyclotide family. Moebius subfamily.</text>
</comment>
<reference evidence="4 5" key="1">
    <citation type="journal article" date="2006" name="J. Mol. Biol.">
        <title>Discovery and characterization of a linear cyclotide from Viola odorata: implications for the processing of circular proteins.</title>
        <authorList>
            <person name="Ireland D.C."/>
            <person name="Colgrave M.L."/>
            <person name="Nguyencong P."/>
            <person name="Daly N.L."/>
            <person name="Craik D.J."/>
        </authorList>
    </citation>
    <scope>NUCLEOTIDE SEQUENCE [MRNA]</scope>
    <scope>PROTEIN SEQUENCE OF 80-106</scope>
    <scope>FUNCTION</scope>
    <scope>MASS SPECTROMETRY</scope>
    <scope>DISULFIDE BONDS</scope>
    <scope>STRUCTURE BY NMR</scope>
</reference>
<reference evidence="4" key="2">
    <citation type="journal article" date="2006" name="Biochem. J.">
        <title>A novel suite of cyclotides from Viola odorata: sequence variation and the implications for structure, function and stability.</title>
        <authorList>
            <person name="Ireland D.C."/>
            <person name="Colgrave M.L."/>
            <person name="Craik D.J."/>
        </authorList>
    </citation>
    <scope>PROTEIN SEQUENCE OF 80-106</scope>
    <scope>MASS SPECTROMETRY</scope>
</reference>
<evidence type="ECO:0000255" key="1"/>
<evidence type="ECO:0000269" key="2">
    <source>
    </source>
</evidence>
<evidence type="ECO:0000269" key="3">
    <source>
    </source>
</evidence>
<evidence type="ECO:0000305" key="4"/>
<evidence type="ECO:0000312" key="5">
    <source>
        <dbReference type="EMBL" id="ABC94585.1"/>
    </source>
</evidence>
<keyword id="KW-0002">3D-structure</keyword>
<keyword id="KW-0204">Cytolysis</keyword>
<keyword id="KW-0903">Direct protein sequencing</keyword>
<keyword id="KW-1015">Disulfide bond</keyword>
<keyword id="KW-0354">Hemolysis</keyword>
<keyword id="KW-0960">Knottin</keyword>
<keyword id="KW-0611">Plant defense</keyword>
<keyword id="KW-0732">Signal</keyword>